<dbReference type="EC" id="3.2.2.23" evidence="2"/>
<dbReference type="EC" id="4.2.99.18" evidence="2"/>
<dbReference type="EMBL" id="CP000133">
    <property type="protein sequence ID" value="ABC89177.1"/>
    <property type="molecule type" value="Genomic_DNA"/>
</dbReference>
<dbReference type="RefSeq" id="WP_011423739.1">
    <property type="nucleotide sequence ID" value="NC_007761.1"/>
</dbReference>
<dbReference type="SMR" id="Q2KDA9"/>
<dbReference type="KEGG" id="ret:RHE_CH00355"/>
<dbReference type="eggNOG" id="COG0266">
    <property type="taxonomic scope" value="Bacteria"/>
</dbReference>
<dbReference type="HOGENOM" id="CLU_038423_1_1_5"/>
<dbReference type="OrthoDB" id="9800855at2"/>
<dbReference type="Proteomes" id="UP000001936">
    <property type="component" value="Chromosome"/>
</dbReference>
<dbReference type="GO" id="GO:0034039">
    <property type="term" value="F:8-oxo-7,8-dihydroguanine DNA N-glycosylase activity"/>
    <property type="evidence" value="ECO:0007669"/>
    <property type="project" value="TreeGrafter"/>
</dbReference>
<dbReference type="GO" id="GO:0140078">
    <property type="term" value="F:class I DNA-(apurinic or apyrimidinic site) endonuclease activity"/>
    <property type="evidence" value="ECO:0007669"/>
    <property type="project" value="UniProtKB-EC"/>
</dbReference>
<dbReference type="GO" id="GO:0003684">
    <property type="term" value="F:damaged DNA binding"/>
    <property type="evidence" value="ECO:0007669"/>
    <property type="project" value="InterPro"/>
</dbReference>
<dbReference type="GO" id="GO:0008270">
    <property type="term" value="F:zinc ion binding"/>
    <property type="evidence" value="ECO:0007669"/>
    <property type="project" value="UniProtKB-UniRule"/>
</dbReference>
<dbReference type="GO" id="GO:0006284">
    <property type="term" value="P:base-excision repair"/>
    <property type="evidence" value="ECO:0007669"/>
    <property type="project" value="InterPro"/>
</dbReference>
<dbReference type="CDD" id="cd08966">
    <property type="entry name" value="EcFpg-like_N"/>
    <property type="match status" value="1"/>
</dbReference>
<dbReference type="FunFam" id="1.10.8.50:FF:000003">
    <property type="entry name" value="Formamidopyrimidine-DNA glycosylase"/>
    <property type="match status" value="1"/>
</dbReference>
<dbReference type="Gene3D" id="1.10.8.50">
    <property type="match status" value="1"/>
</dbReference>
<dbReference type="Gene3D" id="3.20.190.10">
    <property type="entry name" value="MutM-like, N-terminal"/>
    <property type="match status" value="1"/>
</dbReference>
<dbReference type="HAMAP" id="MF_00103">
    <property type="entry name" value="Fapy_DNA_glycosyl"/>
    <property type="match status" value="1"/>
</dbReference>
<dbReference type="InterPro" id="IPR015886">
    <property type="entry name" value="DNA_glyclase/AP_lyase_DNA-bd"/>
</dbReference>
<dbReference type="InterPro" id="IPR015887">
    <property type="entry name" value="DNA_glyclase_Znf_dom_DNA_BS"/>
</dbReference>
<dbReference type="InterPro" id="IPR020629">
    <property type="entry name" value="Formamido-pyr_DNA_Glyclase"/>
</dbReference>
<dbReference type="InterPro" id="IPR012319">
    <property type="entry name" value="FPG_cat"/>
</dbReference>
<dbReference type="InterPro" id="IPR035937">
    <property type="entry name" value="MutM-like_N-ter"/>
</dbReference>
<dbReference type="InterPro" id="IPR010979">
    <property type="entry name" value="Ribosomal_uS13-like_H2TH"/>
</dbReference>
<dbReference type="InterPro" id="IPR000214">
    <property type="entry name" value="Znf_DNA_glyclase/AP_lyase"/>
</dbReference>
<dbReference type="InterPro" id="IPR010663">
    <property type="entry name" value="Znf_FPG/IleRS"/>
</dbReference>
<dbReference type="NCBIfam" id="TIGR00577">
    <property type="entry name" value="fpg"/>
    <property type="match status" value="1"/>
</dbReference>
<dbReference type="NCBIfam" id="NF002211">
    <property type="entry name" value="PRK01103.1"/>
    <property type="match status" value="1"/>
</dbReference>
<dbReference type="PANTHER" id="PTHR22993">
    <property type="entry name" value="FORMAMIDOPYRIMIDINE-DNA GLYCOSYLASE"/>
    <property type="match status" value="1"/>
</dbReference>
<dbReference type="PANTHER" id="PTHR22993:SF9">
    <property type="entry name" value="FORMAMIDOPYRIMIDINE-DNA GLYCOSYLASE"/>
    <property type="match status" value="1"/>
</dbReference>
<dbReference type="Pfam" id="PF01149">
    <property type="entry name" value="Fapy_DNA_glyco"/>
    <property type="match status" value="1"/>
</dbReference>
<dbReference type="Pfam" id="PF06831">
    <property type="entry name" value="H2TH"/>
    <property type="match status" value="1"/>
</dbReference>
<dbReference type="Pfam" id="PF06827">
    <property type="entry name" value="zf-FPG_IleRS"/>
    <property type="match status" value="1"/>
</dbReference>
<dbReference type="SMART" id="SM00898">
    <property type="entry name" value="Fapy_DNA_glyco"/>
    <property type="match status" value="1"/>
</dbReference>
<dbReference type="SMART" id="SM01232">
    <property type="entry name" value="H2TH"/>
    <property type="match status" value="1"/>
</dbReference>
<dbReference type="SUPFAM" id="SSF57716">
    <property type="entry name" value="Glucocorticoid receptor-like (DNA-binding domain)"/>
    <property type="match status" value="1"/>
</dbReference>
<dbReference type="SUPFAM" id="SSF81624">
    <property type="entry name" value="N-terminal domain of MutM-like DNA repair proteins"/>
    <property type="match status" value="1"/>
</dbReference>
<dbReference type="SUPFAM" id="SSF46946">
    <property type="entry name" value="S13-like H2TH domain"/>
    <property type="match status" value="1"/>
</dbReference>
<dbReference type="PROSITE" id="PS51068">
    <property type="entry name" value="FPG_CAT"/>
    <property type="match status" value="1"/>
</dbReference>
<dbReference type="PROSITE" id="PS01242">
    <property type="entry name" value="ZF_FPG_1"/>
    <property type="match status" value="1"/>
</dbReference>
<dbReference type="PROSITE" id="PS51066">
    <property type="entry name" value="ZF_FPG_2"/>
    <property type="match status" value="1"/>
</dbReference>
<reference key="1">
    <citation type="journal article" date="2006" name="Proc. Natl. Acad. Sci. U.S.A.">
        <title>The partitioned Rhizobium etli genome: genetic and metabolic redundancy in seven interacting replicons.</title>
        <authorList>
            <person name="Gonzalez V."/>
            <person name="Santamaria R.I."/>
            <person name="Bustos P."/>
            <person name="Hernandez-Gonzalez I."/>
            <person name="Medrano-Soto A."/>
            <person name="Moreno-Hagelsieb G."/>
            <person name="Janga S.C."/>
            <person name="Ramirez M.A."/>
            <person name="Jimenez-Jacinto V."/>
            <person name="Collado-Vides J."/>
            <person name="Davila G."/>
        </authorList>
    </citation>
    <scope>NUCLEOTIDE SEQUENCE [LARGE SCALE GENOMIC DNA]</scope>
    <source>
        <strain>ATCC 51251 / DSM 11541 / JCM 21823 / NBRC 15573 / CFN 42</strain>
    </source>
</reference>
<name>FPG_RHIEC</name>
<sequence length="296" mass="32208">MPELPEVETVKRGLAPAMEGARVTRLELRRRDLRFPFPDALAERVSGRTIVGLGRRAKYLLVDLDDGNTLISHLGMSGSFRIEEGAASAMPGEFHHARSKDEKHDHVVFHLEGGGGPRRVVYNDPRRFGFMDIVGRADLSAHPFFRDLGPEPTGNELGATYLAERFRDKAQPLKSALLDQKNIAGLGNIYVCEALWRSHLSPIRAAGTLVTSGGRPKQQLDLLVASIREVIADAIAAGGSSLRDHIRADGSLGYFQHSFSVYDREGQACGTPGCGGTVARIVQAGRSTFYCAACQK</sequence>
<comment type="function">
    <text evidence="2">Involved in base excision repair of DNA damaged by oxidation or by mutagenic agents. Acts as a DNA glycosylase that recognizes and removes damaged bases. Has a preference for oxidized purines, such as 7,8-dihydro-8-oxoguanine (8-oxoG). Has AP (apurinic/apyrimidinic) lyase activity and introduces nicks in the DNA strand. Cleaves the DNA backbone by beta-delta elimination to generate a single-strand break at the site of the removed base with both 3'- and 5'-phosphates.</text>
</comment>
<comment type="catalytic activity">
    <reaction evidence="2">
        <text>Hydrolysis of DNA containing ring-opened 7-methylguanine residues, releasing 2,6-diamino-4-hydroxy-5-(N-methyl)formamidopyrimidine.</text>
        <dbReference type="EC" id="3.2.2.23"/>
    </reaction>
</comment>
<comment type="catalytic activity">
    <reaction evidence="2">
        <text>2'-deoxyribonucleotide-(2'-deoxyribose 5'-phosphate)-2'-deoxyribonucleotide-DNA = a 3'-end 2'-deoxyribonucleotide-(2,3-dehydro-2,3-deoxyribose 5'-phosphate)-DNA + a 5'-end 5'-phospho-2'-deoxyribonucleoside-DNA + H(+)</text>
        <dbReference type="Rhea" id="RHEA:66592"/>
        <dbReference type="Rhea" id="RHEA-COMP:13180"/>
        <dbReference type="Rhea" id="RHEA-COMP:16897"/>
        <dbReference type="Rhea" id="RHEA-COMP:17067"/>
        <dbReference type="ChEBI" id="CHEBI:15378"/>
        <dbReference type="ChEBI" id="CHEBI:136412"/>
        <dbReference type="ChEBI" id="CHEBI:157695"/>
        <dbReference type="ChEBI" id="CHEBI:167181"/>
        <dbReference type="EC" id="4.2.99.18"/>
    </reaction>
</comment>
<comment type="cofactor">
    <cofactor evidence="2">
        <name>Zn(2+)</name>
        <dbReference type="ChEBI" id="CHEBI:29105"/>
    </cofactor>
    <text evidence="2">Binds 1 zinc ion per subunit.</text>
</comment>
<comment type="subunit">
    <text evidence="2">Monomer.</text>
</comment>
<comment type="similarity">
    <text evidence="2">Belongs to the FPG family.</text>
</comment>
<feature type="initiator methionine" description="Removed" evidence="1">
    <location>
        <position position="1"/>
    </location>
</feature>
<feature type="chain" id="PRO_1000008750" description="Formamidopyrimidine-DNA glycosylase">
    <location>
        <begin position="2"/>
        <end position="296"/>
    </location>
</feature>
<feature type="zinc finger region" description="FPG-type" evidence="2">
    <location>
        <begin position="260"/>
        <end position="296"/>
    </location>
</feature>
<feature type="active site" description="Schiff-base intermediate with DNA" evidence="2">
    <location>
        <position position="2"/>
    </location>
</feature>
<feature type="active site" description="Proton donor" evidence="2">
    <location>
        <position position="3"/>
    </location>
</feature>
<feature type="active site" description="Proton donor; for beta-elimination activity" evidence="2">
    <location>
        <position position="58"/>
    </location>
</feature>
<feature type="active site" description="Proton donor; for delta-elimination activity" evidence="2">
    <location>
        <position position="286"/>
    </location>
</feature>
<feature type="binding site" evidence="2">
    <location>
        <position position="104"/>
    </location>
    <ligand>
        <name>DNA</name>
        <dbReference type="ChEBI" id="CHEBI:16991"/>
    </ligand>
</feature>
<feature type="binding site" evidence="2">
    <location>
        <position position="126"/>
    </location>
    <ligand>
        <name>DNA</name>
        <dbReference type="ChEBI" id="CHEBI:16991"/>
    </ligand>
</feature>
<feature type="binding site" evidence="2">
    <location>
        <position position="169"/>
    </location>
    <ligand>
        <name>DNA</name>
        <dbReference type="ChEBI" id="CHEBI:16991"/>
    </ligand>
</feature>
<protein>
    <recommendedName>
        <fullName evidence="2">Formamidopyrimidine-DNA glycosylase</fullName>
        <shortName evidence="2">Fapy-DNA glycosylase</shortName>
        <ecNumber evidence="2">3.2.2.23</ecNumber>
    </recommendedName>
    <alternativeName>
        <fullName evidence="2">DNA-(apurinic or apyrimidinic site) lyase MutM</fullName>
        <shortName evidence="2">AP lyase MutM</shortName>
        <ecNumber evidence="2">4.2.99.18</ecNumber>
    </alternativeName>
</protein>
<gene>
    <name evidence="2" type="primary">mutM</name>
    <name evidence="2" type="synonym">fpg</name>
    <name type="ordered locus">RHE_CH00355</name>
</gene>
<accession>Q2KDA9</accession>
<organism>
    <name type="scientific">Rhizobium etli (strain ATCC 51251 / DSM 11541 / JCM 21823 / NBRC 15573 / CFN 42)</name>
    <dbReference type="NCBI Taxonomy" id="347834"/>
    <lineage>
        <taxon>Bacteria</taxon>
        <taxon>Pseudomonadati</taxon>
        <taxon>Pseudomonadota</taxon>
        <taxon>Alphaproteobacteria</taxon>
        <taxon>Hyphomicrobiales</taxon>
        <taxon>Rhizobiaceae</taxon>
        <taxon>Rhizobium/Agrobacterium group</taxon>
        <taxon>Rhizobium</taxon>
    </lineage>
</organism>
<proteinExistence type="inferred from homology"/>
<keyword id="KW-0227">DNA damage</keyword>
<keyword id="KW-0234">DNA repair</keyword>
<keyword id="KW-0238">DNA-binding</keyword>
<keyword id="KW-0326">Glycosidase</keyword>
<keyword id="KW-0378">Hydrolase</keyword>
<keyword id="KW-0456">Lyase</keyword>
<keyword id="KW-0479">Metal-binding</keyword>
<keyword id="KW-0511">Multifunctional enzyme</keyword>
<keyword id="KW-1185">Reference proteome</keyword>
<keyword id="KW-0862">Zinc</keyword>
<keyword id="KW-0863">Zinc-finger</keyword>
<evidence type="ECO:0000250" key="1"/>
<evidence type="ECO:0000255" key="2">
    <source>
        <dbReference type="HAMAP-Rule" id="MF_00103"/>
    </source>
</evidence>